<protein>
    <recommendedName>
        <fullName evidence="1">UDP-N-acetylenolpyruvoylglucosamine reductase</fullName>
        <ecNumber evidence="1">1.3.1.98</ecNumber>
    </recommendedName>
    <alternativeName>
        <fullName evidence="1">UDP-N-acetylmuramate dehydrogenase</fullName>
    </alternativeName>
</protein>
<evidence type="ECO:0000255" key="1">
    <source>
        <dbReference type="HAMAP-Rule" id="MF_00037"/>
    </source>
</evidence>
<dbReference type="EC" id="1.3.1.98" evidence="1"/>
<dbReference type="EMBL" id="AE014184">
    <property type="protein sequence ID" value="AAO44815.1"/>
    <property type="molecule type" value="Genomic_DNA"/>
</dbReference>
<dbReference type="RefSeq" id="WP_011102748.1">
    <property type="nucleotide sequence ID" value="NC_004572.3"/>
</dbReference>
<dbReference type="SMR" id="Q83FK5"/>
<dbReference type="STRING" id="203267.TWT_718"/>
<dbReference type="KEGG" id="twh:TWT_718"/>
<dbReference type="eggNOG" id="COG0812">
    <property type="taxonomic scope" value="Bacteria"/>
</dbReference>
<dbReference type="HOGENOM" id="CLU_035304_0_1_11"/>
<dbReference type="OrthoDB" id="9804753at2"/>
<dbReference type="UniPathway" id="UPA00219"/>
<dbReference type="Proteomes" id="UP000002200">
    <property type="component" value="Chromosome"/>
</dbReference>
<dbReference type="GO" id="GO:0005829">
    <property type="term" value="C:cytosol"/>
    <property type="evidence" value="ECO:0007669"/>
    <property type="project" value="TreeGrafter"/>
</dbReference>
<dbReference type="GO" id="GO:0071949">
    <property type="term" value="F:FAD binding"/>
    <property type="evidence" value="ECO:0007669"/>
    <property type="project" value="InterPro"/>
</dbReference>
<dbReference type="GO" id="GO:0008762">
    <property type="term" value="F:UDP-N-acetylmuramate dehydrogenase activity"/>
    <property type="evidence" value="ECO:0007669"/>
    <property type="project" value="UniProtKB-UniRule"/>
</dbReference>
<dbReference type="GO" id="GO:0051301">
    <property type="term" value="P:cell division"/>
    <property type="evidence" value="ECO:0007669"/>
    <property type="project" value="UniProtKB-KW"/>
</dbReference>
<dbReference type="GO" id="GO:0071555">
    <property type="term" value="P:cell wall organization"/>
    <property type="evidence" value="ECO:0007669"/>
    <property type="project" value="UniProtKB-KW"/>
</dbReference>
<dbReference type="GO" id="GO:0009252">
    <property type="term" value="P:peptidoglycan biosynthetic process"/>
    <property type="evidence" value="ECO:0007669"/>
    <property type="project" value="UniProtKB-UniRule"/>
</dbReference>
<dbReference type="GO" id="GO:0008360">
    <property type="term" value="P:regulation of cell shape"/>
    <property type="evidence" value="ECO:0007669"/>
    <property type="project" value="UniProtKB-KW"/>
</dbReference>
<dbReference type="Gene3D" id="3.30.465.10">
    <property type="match status" value="1"/>
</dbReference>
<dbReference type="Gene3D" id="3.90.78.10">
    <property type="entry name" value="UDP-N-acetylenolpyruvoylglucosamine reductase, C-terminal domain"/>
    <property type="match status" value="1"/>
</dbReference>
<dbReference type="Gene3D" id="3.30.43.10">
    <property type="entry name" value="Uridine Diphospho-n-acetylenolpyruvylglucosamine Reductase, domain 2"/>
    <property type="match status" value="1"/>
</dbReference>
<dbReference type="HAMAP" id="MF_00037">
    <property type="entry name" value="MurB"/>
    <property type="match status" value="1"/>
</dbReference>
<dbReference type="InterPro" id="IPR016166">
    <property type="entry name" value="FAD-bd_PCMH"/>
</dbReference>
<dbReference type="InterPro" id="IPR036318">
    <property type="entry name" value="FAD-bd_PCMH-like_sf"/>
</dbReference>
<dbReference type="InterPro" id="IPR016167">
    <property type="entry name" value="FAD-bd_PCMH_sub1"/>
</dbReference>
<dbReference type="InterPro" id="IPR016169">
    <property type="entry name" value="FAD-bd_PCMH_sub2"/>
</dbReference>
<dbReference type="InterPro" id="IPR003170">
    <property type="entry name" value="MurB"/>
</dbReference>
<dbReference type="InterPro" id="IPR011601">
    <property type="entry name" value="MurB_C"/>
</dbReference>
<dbReference type="InterPro" id="IPR036635">
    <property type="entry name" value="MurB_C_sf"/>
</dbReference>
<dbReference type="InterPro" id="IPR006094">
    <property type="entry name" value="Oxid_FAD_bind_N"/>
</dbReference>
<dbReference type="NCBIfam" id="NF010478">
    <property type="entry name" value="PRK13903.1"/>
    <property type="match status" value="1"/>
</dbReference>
<dbReference type="PANTHER" id="PTHR21071">
    <property type="entry name" value="UDP-N-ACETYLENOLPYRUVOYLGLUCOSAMINE REDUCTASE"/>
    <property type="match status" value="1"/>
</dbReference>
<dbReference type="PANTHER" id="PTHR21071:SF4">
    <property type="entry name" value="UDP-N-ACETYLENOLPYRUVOYLGLUCOSAMINE REDUCTASE"/>
    <property type="match status" value="1"/>
</dbReference>
<dbReference type="Pfam" id="PF01565">
    <property type="entry name" value="FAD_binding_4"/>
    <property type="match status" value="1"/>
</dbReference>
<dbReference type="Pfam" id="PF02873">
    <property type="entry name" value="MurB_C"/>
    <property type="match status" value="1"/>
</dbReference>
<dbReference type="SUPFAM" id="SSF56176">
    <property type="entry name" value="FAD-binding/transporter-associated domain-like"/>
    <property type="match status" value="1"/>
</dbReference>
<dbReference type="SUPFAM" id="SSF56194">
    <property type="entry name" value="Uridine diphospho-N-Acetylenolpyruvylglucosamine reductase, MurB, C-terminal domain"/>
    <property type="match status" value="1"/>
</dbReference>
<dbReference type="PROSITE" id="PS51387">
    <property type="entry name" value="FAD_PCMH"/>
    <property type="match status" value="1"/>
</dbReference>
<reference key="1">
    <citation type="journal article" date="2003" name="Genome Res.">
        <title>Tropheryma whipplei twist: a human pathogenic Actinobacteria with a reduced genome.</title>
        <authorList>
            <person name="Raoult D."/>
            <person name="Ogata H."/>
            <person name="Audic S."/>
            <person name="Robert C."/>
            <person name="Suhre K."/>
            <person name="Drancourt M."/>
            <person name="Claverie J.-M."/>
        </authorList>
    </citation>
    <scope>NUCLEOTIDE SEQUENCE [LARGE SCALE GENOMIC DNA]</scope>
    <source>
        <strain>Twist</strain>
    </source>
</reference>
<comment type="function">
    <text evidence="1">Cell wall formation.</text>
</comment>
<comment type="catalytic activity">
    <reaction evidence="1">
        <text>UDP-N-acetyl-alpha-D-muramate + NADP(+) = UDP-N-acetyl-3-O-(1-carboxyvinyl)-alpha-D-glucosamine + NADPH + H(+)</text>
        <dbReference type="Rhea" id="RHEA:12248"/>
        <dbReference type="ChEBI" id="CHEBI:15378"/>
        <dbReference type="ChEBI" id="CHEBI:57783"/>
        <dbReference type="ChEBI" id="CHEBI:58349"/>
        <dbReference type="ChEBI" id="CHEBI:68483"/>
        <dbReference type="ChEBI" id="CHEBI:70757"/>
        <dbReference type="EC" id="1.3.1.98"/>
    </reaction>
</comment>
<comment type="cofactor">
    <cofactor evidence="1">
        <name>FAD</name>
        <dbReference type="ChEBI" id="CHEBI:57692"/>
    </cofactor>
</comment>
<comment type="pathway">
    <text evidence="1">Cell wall biogenesis; peptidoglycan biosynthesis.</text>
</comment>
<comment type="subcellular location">
    <subcellularLocation>
        <location evidence="1">Cytoplasm</location>
    </subcellularLocation>
</comment>
<comment type="similarity">
    <text evidence="1">Belongs to the MurB family.</text>
</comment>
<gene>
    <name evidence="1" type="primary">murB</name>
    <name type="ordered locus">TWT_718</name>
</gene>
<keyword id="KW-0131">Cell cycle</keyword>
<keyword id="KW-0132">Cell division</keyword>
<keyword id="KW-0133">Cell shape</keyword>
<keyword id="KW-0961">Cell wall biogenesis/degradation</keyword>
<keyword id="KW-0963">Cytoplasm</keyword>
<keyword id="KW-0274">FAD</keyword>
<keyword id="KW-0285">Flavoprotein</keyword>
<keyword id="KW-0521">NADP</keyword>
<keyword id="KW-0560">Oxidoreductase</keyword>
<keyword id="KW-0573">Peptidoglycan synthesis</keyword>
<keyword id="KW-1185">Reference proteome</keyword>
<feature type="chain" id="PRO_0000179284" description="UDP-N-acetylenolpyruvoylglucosamine reductase">
    <location>
        <begin position="1"/>
        <end position="351"/>
    </location>
</feature>
<feature type="domain" description="FAD-binding PCMH-type" evidence="1">
    <location>
        <begin position="11"/>
        <end position="213"/>
    </location>
</feature>
<feature type="active site" evidence="1">
    <location>
        <position position="158"/>
    </location>
</feature>
<feature type="active site" description="Proton donor" evidence="1">
    <location>
        <position position="239"/>
    </location>
</feature>
<feature type="active site" evidence="1">
    <location>
        <position position="343"/>
    </location>
</feature>
<name>MURB_TROWT</name>
<accession>Q83FK5</accession>
<organism>
    <name type="scientific">Tropheryma whipplei (strain Twist)</name>
    <name type="common">Whipple's bacillus</name>
    <dbReference type="NCBI Taxonomy" id="203267"/>
    <lineage>
        <taxon>Bacteria</taxon>
        <taxon>Bacillati</taxon>
        <taxon>Actinomycetota</taxon>
        <taxon>Actinomycetes</taxon>
        <taxon>Micrococcales</taxon>
        <taxon>Tropherymataceae</taxon>
        <taxon>Tropheryma</taxon>
    </lineage>
</organism>
<sequence length="351" mass="37408">MVSFSEITTLGVGGSIACFIECSPDEFVERAPGLFRPGHHVLVVGGGSNLVASDCPFPGTVVRLKSRDTIVSDDGDYTRFSISAGTSWDDLVSYSLDLGFDQLSPMSGIPGTFGGALAQNISAYGAAVRDVLGSVEVYDACTSEVVTFGLEDMRYGYRTSALKNVRNKVILGGTLLLKPGPTPVLHRQLANALKVDLGTYCSGKQVRDQVLRIRAEKGMLPRYLVPKGFDVCNTSSVGSFFVNPIVSKEHLSRLRRLVPQGALNSSVIQTDEMGGVKVSAAFLLEQSGFEKGFCISGSQAAISTQHSLAIVNRGGATAAEVIELAGLITRTVSRKFDIHLIPEPVFVGLEL</sequence>
<proteinExistence type="inferred from homology"/>